<protein>
    <recommendedName>
        <fullName evidence="1">Hydroxyethylthiazole kinase</fullName>
        <ecNumber evidence="1">2.7.1.50</ecNumber>
    </recommendedName>
    <alternativeName>
        <fullName evidence="1">4-methyl-5-beta-hydroxyethylthiazole kinase</fullName>
        <shortName evidence="1">TH kinase</shortName>
        <shortName evidence="1">Thz kinase</shortName>
    </alternativeName>
</protein>
<evidence type="ECO:0000255" key="1">
    <source>
        <dbReference type="HAMAP-Rule" id="MF_00228"/>
    </source>
</evidence>
<organism>
    <name type="scientific">Ruminiclostridium cellulolyticum (strain ATCC 35319 / DSM 5812 / JCM 6584 / H10)</name>
    <name type="common">Clostridium cellulolyticum</name>
    <dbReference type="NCBI Taxonomy" id="394503"/>
    <lineage>
        <taxon>Bacteria</taxon>
        <taxon>Bacillati</taxon>
        <taxon>Bacillota</taxon>
        <taxon>Clostridia</taxon>
        <taxon>Eubacteriales</taxon>
        <taxon>Oscillospiraceae</taxon>
        <taxon>Ruminiclostridium</taxon>
    </lineage>
</organism>
<accession>B8I3J5</accession>
<feature type="chain" id="PRO_0000383848" description="Hydroxyethylthiazole kinase">
    <location>
        <begin position="1"/>
        <end position="273"/>
    </location>
</feature>
<feature type="binding site" evidence="1">
    <location>
        <position position="47"/>
    </location>
    <ligand>
        <name>substrate</name>
    </ligand>
</feature>
<feature type="binding site" evidence="1">
    <location>
        <position position="123"/>
    </location>
    <ligand>
        <name>ATP</name>
        <dbReference type="ChEBI" id="CHEBI:30616"/>
    </ligand>
</feature>
<feature type="binding site" evidence="1">
    <location>
        <position position="172"/>
    </location>
    <ligand>
        <name>ATP</name>
        <dbReference type="ChEBI" id="CHEBI:30616"/>
    </ligand>
</feature>
<feature type="binding site" evidence="1">
    <location>
        <position position="199"/>
    </location>
    <ligand>
        <name>substrate</name>
    </ligand>
</feature>
<proteinExistence type="inferred from homology"/>
<gene>
    <name evidence="1" type="primary">thiM</name>
    <name type="ordered locus">Ccel_1990</name>
</gene>
<comment type="function">
    <text evidence="1">Catalyzes the phosphorylation of the hydroxyl group of 4-methyl-5-beta-hydroxyethylthiazole (THZ).</text>
</comment>
<comment type="catalytic activity">
    <reaction evidence="1">
        <text>5-(2-hydroxyethyl)-4-methylthiazole + ATP = 4-methyl-5-(2-phosphooxyethyl)-thiazole + ADP + H(+)</text>
        <dbReference type="Rhea" id="RHEA:24212"/>
        <dbReference type="ChEBI" id="CHEBI:15378"/>
        <dbReference type="ChEBI" id="CHEBI:17957"/>
        <dbReference type="ChEBI" id="CHEBI:30616"/>
        <dbReference type="ChEBI" id="CHEBI:58296"/>
        <dbReference type="ChEBI" id="CHEBI:456216"/>
        <dbReference type="EC" id="2.7.1.50"/>
    </reaction>
</comment>
<comment type="cofactor">
    <cofactor evidence="1">
        <name>Mg(2+)</name>
        <dbReference type="ChEBI" id="CHEBI:18420"/>
    </cofactor>
</comment>
<comment type="pathway">
    <text evidence="1">Cofactor biosynthesis; thiamine diphosphate biosynthesis; 4-methyl-5-(2-phosphoethyl)-thiazole from 5-(2-hydroxyethyl)-4-methylthiazole: step 1/1.</text>
</comment>
<comment type="similarity">
    <text evidence="1">Belongs to the Thz kinase family.</text>
</comment>
<dbReference type="EC" id="2.7.1.50" evidence="1"/>
<dbReference type="EMBL" id="CP001348">
    <property type="protein sequence ID" value="ACL76338.1"/>
    <property type="molecule type" value="Genomic_DNA"/>
</dbReference>
<dbReference type="RefSeq" id="WP_015925442.1">
    <property type="nucleotide sequence ID" value="NC_011898.1"/>
</dbReference>
<dbReference type="SMR" id="B8I3J5"/>
<dbReference type="STRING" id="394503.Ccel_1990"/>
<dbReference type="KEGG" id="cce:Ccel_1990"/>
<dbReference type="eggNOG" id="COG2145">
    <property type="taxonomic scope" value="Bacteria"/>
</dbReference>
<dbReference type="HOGENOM" id="CLU_019943_0_1_9"/>
<dbReference type="OrthoDB" id="9778146at2"/>
<dbReference type="UniPathway" id="UPA00060">
    <property type="reaction ID" value="UER00139"/>
</dbReference>
<dbReference type="Proteomes" id="UP000001349">
    <property type="component" value="Chromosome"/>
</dbReference>
<dbReference type="GO" id="GO:0005524">
    <property type="term" value="F:ATP binding"/>
    <property type="evidence" value="ECO:0007669"/>
    <property type="project" value="UniProtKB-UniRule"/>
</dbReference>
<dbReference type="GO" id="GO:0004417">
    <property type="term" value="F:hydroxyethylthiazole kinase activity"/>
    <property type="evidence" value="ECO:0007669"/>
    <property type="project" value="UniProtKB-UniRule"/>
</dbReference>
<dbReference type="GO" id="GO:0000287">
    <property type="term" value="F:magnesium ion binding"/>
    <property type="evidence" value="ECO:0007669"/>
    <property type="project" value="UniProtKB-UniRule"/>
</dbReference>
<dbReference type="GO" id="GO:0009228">
    <property type="term" value="P:thiamine biosynthetic process"/>
    <property type="evidence" value="ECO:0007669"/>
    <property type="project" value="UniProtKB-KW"/>
</dbReference>
<dbReference type="GO" id="GO:0009229">
    <property type="term" value="P:thiamine diphosphate biosynthetic process"/>
    <property type="evidence" value="ECO:0007669"/>
    <property type="project" value="UniProtKB-UniRule"/>
</dbReference>
<dbReference type="CDD" id="cd01170">
    <property type="entry name" value="THZ_kinase"/>
    <property type="match status" value="1"/>
</dbReference>
<dbReference type="Gene3D" id="3.40.1190.20">
    <property type="match status" value="1"/>
</dbReference>
<dbReference type="HAMAP" id="MF_00228">
    <property type="entry name" value="Thz_kinase"/>
    <property type="match status" value="1"/>
</dbReference>
<dbReference type="InterPro" id="IPR000417">
    <property type="entry name" value="Hyethyz_kinase"/>
</dbReference>
<dbReference type="InterPro" id="IPR029056">
    <property type="entry name" value="Ribokinase-like"/>
</dbReference>
<dbReference type="NCBIfam" id="NF006830">
    <property type="entry name" value="PRK09355.1"/>
    <property type="match status" value="1"/>
</dbReference>
<dbReference type="NCBIfam" id="TIGR00694">
    <property type="entry name" value="thiM"/>
    <property type="match status" value="1"/>
</dbReference>
<dbReference type="Pfam" id="PF02110">
    <property type="entry name" value="HK"/>
    <property type="match status" value="1"/>
</dbReference>
<dbReference type="PIRSF" id="PIRSF000513">
    <property type="entry name" value="Thz_kinase"/>
    <property type="match status" value="1"/>
</dbReference>
<dbReference type="PRINTS" id="PR01099">
    <property type="entry name" value="HYETHTZKNASE"/>
</dbReference>
<dbReference type="SUPFAM" id="SSF53613">
    <property type="entry name" value="Ribokinase-like"/>
    <property type="match status" value="1"/>
</dbReference>
<sequence>MSEYTKQITRLISEVRSKKPLIHNITNYVTVNDCANVTLAIGASPIMADDIDEAADITSISSALVINIGTLNKRTIESMILSGKKANEKGIPVIFDPVGAGASALRNETTSTILDKIKISVLRGNLSEISYIAGRNASTKGVDASEADIQSNDSIAVAKAAAVKLGCVVAVTGAVDVISDGKNVVTVLNGHKMLSNVTGTGCMTTALVGSFCGAVKDYFKAAVAGVTVMGISGEIAYEAAGHKGTGSYHIAIIDAISRMDENIFGEKARINEI</sequence>
<reference key="1">
    <citation type="submission" date="2009-01" db="EMBL/GenBank/DDBJ databases">
        <title>Complete sequence of Clostridium cellulolyticum H10.</title>
        <authorList>
            <consortium name="US DOE Joint Genome Institute"/>
            <person name="Lucas S."/>
            <person name="Copeland A."/>
            <person name="Lapidus A."/>
            <person name="Glavina del Rio T."/>
            <person name="Dalin E."/>
            <person name="Tice H."/>
            <person name="Bruce D."/>
            <person name="Goodwin L."/>
            <person name="Pitluck S."/>
            <person name="Chertkov O."/>
            <person name="Saunders E."/>
            <person name="Brettin T."/>
            <person name="Detter J.C."/>
            <person name="Han C."/>
            <person name="Larimer F."/>
            <person name="Land M."/>
            <person name="Hauser L."/>
            <person name="Kyrpides N."/>
            <person name="Ivanova N."/>
            <person name="Zhou J."/>
            <person name="Richardson P."/>
        </authorList>
    </citation>
    <scope>NUCLEOTIDE SEQUENCE [LARGE SCALE GENOMIC DNA]</scope>
    <source>
        <strain>ATCC 35319 / DSM 5812 / JCM 6584 / H10</strain>
    </source>
</reference>
<name>THIM_RUMCH</name>
<keyword id="KW-0067">ATP-binding</keyword>
<keyword id="KW-0418">Kinase</keyword>
<keyword id="KW-0460">Magnesium</keyword>
<keyword id="KW-0479">Metal-binding</keyword>
<keyword id="KW-0547">Nucleotide-binding</keyword>
<keyword id="KW-1185">Reference proteome</keyword>
<keyword id="KW-0784">Thiamine biosynthesis</keyword>
<keyword id="KW-0808">Transferase</keyword>